<gene>
    <name type="primary">fba</name>
    <name type="synonym">fda</name>
</gene>
<organism>
    <name type="scientific">Stutzerimonas stutzeri</name>
    <name type="common">Pseudomonas stutzeri</name>
    <dbReference type="NCBI Taxonomy" id="316"/>
    <lineage>
        <taxon>Bacteria</taxon>
        <taxon>Pseudomonadati</taxon>
        <taxon>Pseudomonadota</taxon>
        <taxon>Gammaproteobacteria</taxon>
        <taxon>Pseudomonadales</taxon>
        <taxon>Pseudomonadaceae</taxon>
        <taxon>Stutzerimonas</taxon>
    </lineage>
</organism>
<evidence type="ECO:0000250" key="1"/>
<evidence type="ECO:0000305" key="2"/>
<reference key="1">
    <citation type="submission" date="1998-10" db="EMBL/GenBank/DDBJ databases">
        <authorList>
            <person name="Graupner S."/>
        </authorList>
    </citation>
    <scope>NUCLEOTIDE SEQUENCE [GENOMIC DNA]</scope>
    <source>
        <strain>JM375</strain>
    </source>
</reference>
<protein>
    <recommendedName>
        <fullName>Fructose-bisphosphate aldolase</fullName>
        <shortName>FBP aldolase</shortName>
        <shortName>FBPA</shortName>
        <ecNumber>4.1.2.13</ecNumber>
    </recommendedName>
    <alternativeName>
        <fullName>Fructose-1,6-bisphosphate aldolase</fullName>
    </alternativeName>
</protein>
<feature type="chain" id="PRO_0000178726" description="Fructose-bisphosphate aldolase">
    <location>
        <begin position="1"/>
        <end position="354"/>
    </location>
</feature>
<feature type="active site" description="Proton donor" evidence="1">
    <location>
        <position position="83"/>
    </location>
</feature>
<feature type="binding site" evidence="1">
    <location>
        <position position="50"/>
    </location>
    <ligand>
        <name>D-glyceraldehyde 3-phosphate</name>
        <dbReference type="ChEBI" id="CHEBI:59776"/>
    </ligand>
</feature>
<feature type="binding site" evidence="1">
    <location>
        <position position="84"/>
    </location>
    <ligand>
        <name>Zn(2+)</name>
        <dbReference type="ChEBI" id="CHEBI:29105"/>
        <label>1</label>
        <note>catalytic</note>
    </ligand>
</feature>
<feature type="binding site" evidence="1">
    <location>
        <position position="105"/>
    </location>
    <ligand>
        <name>Zn(2+)</name>
        <dbReference type="ChEBI" id="CHEBI:29105"/>
        <label>2</label>
    </ligand>
</feature>
<feature type="binding site" evidence="1">
    <location>
        <position position="142"/>
    </location>
    <ligand>
        <name>Zn(2+)</name>
        <dbReference type="ChEBI" id="CHEBI:29105"/>
        <label>2</label>
    </ligand>
</feature>
<feature type="binding site" evidence="1">
    <location>
        <position position="198"/>
    </location>
    <ligand>
        <name>Zn(2+)</name>
        <dbReference type="ChEBI" id="CHEBI:29105"/>
        <label>1</label>
        <note>catalytic</note>
    </ligand>
</feature>
<feature type="binding site" evidence="1">
    <location>
        <position position="199"/>
    </location>
    <ligand>
        <name>dihydroxyacetone phosphate</name>
        <dbReference type="ChEBI" id="CHEBI:57642"/>
    </ligand>
</feature>
<feature type="binding site" evidence="1">
    <location>
        <position position="232"/>
    </location>
    <ligand>
        <name>Zn(2+)</name>
        <dbReference type="ChEBI" id="CHEBI:29105"/>
        <label>1</label>
        <note>catalytic</note>
    </ligand>
</feature>
<feature type="binding site" evidence="1">
    <location>
        <begin position="233"/>
        <end position="235"/>
    </location>
    <ligand>
        <name>dihydroxyacetone phosphate</name>
        <dbReference type="ChEBI" id="CHEBI:57642"/>
    </ligand>
</feature>
<feature type="binding site" evidence="1">
    <location>
        <begin position="275"/>
        <end position="278"/>
    </location>
    <ligand>
        <name>dihydroxyacetone phosphate</name>
        <dbReference type="ChEBI" id="CHEBI:57642"/>
    </ligand>
</feature>
<accession>O87796</accession>
<dbReference type="EC" id="4.1.2.13"/>
<dbReference type="EMBL" id="AJ011927">
    <property type="protein sequence ID" value="CAA09871.1"/>
    <property type="molecule type" value="Genomic_DNA"/>
</dbReference>
<dbReference type="SMR" id="O87796"/>
<dbReference type="eggNOG" id="COG0191">
    <property type="taxonomic scope" value="Bacteria"/>
</dbReference>
<dbReference type="UniPathway" id="UPA00109">
    <property type="reaction ID" value="UER00183"/>
</dbReference>
<dbReference type="GO" id="GO:0004332">
    <property type="term" value="F:fructose-bisphosphate aldolase activity"/>
    <property type="evidence" value="ECO:0007669"/>
    <property type="project" value="UniProtKB-EC"/>
</dbReference>
<dbReference type="GO" id="GO:0008270">
    <property type="term" value="F:zinc ion binding"/>
    <property type="evidence" value="ECO:0007669"/>
    <property type="project" value="InterPro"/>
</dbReference>
<dbReference type="GO" id="GO:0006096">
    <property type="term" value="P:glycolytic process"/>
    <property type="evidence" value="ECO:0007669"/>
    <property type="project" value="UniProtKB-UniPathway"/>
</dbReference>
<dbReference type="CDD" id="cd00947">
    <property type="entry name" value="TBP_aldolase_IIB"/>
    <property type="match status" value="1"/>
</dbReference>
<dbReference type="FunFam" id="3.20.20.70:FF:000111">
    <property type="entry name" value="Fructose-1,6-bisphosphate aldolase"/>
    <property type="match status" value="1"/>
</dbReference>
<dbReference type="Gene3D" id="3.20.20.70">
    <property type="entry name" value="Aldolase class I"/>
    <property type="match status" value="1"/>
</dbReference>
<dbReference type="InterPro" id="IPR013785">
    <property type="entry name" value="Aldolase_TIM"/>
</dbReference>
<dbReference type="InterPro" id="IPR050246">
    <property type="entry name" value="Class_II_FBP_aldolase"/>
</dbReference>
<dbReference type="InterPro" id="IPR000771">
    <property type="entry name" value="FBA_II"/>
</dbReference>
<dbReference type="InterPro" id="IPR006412">
    <property type="entry name" value="Fruct_bisP_Calv"/>
</dbReference>
<dbReference type="NCBIfam" id="TIGR00167">
    <property type="entry name" value="cbbA"/>
    <property type="match status" value="1"/>
</dbReference>
<dbReference type="NCBIfam" id="TIGR01521">
    <property type="entry name" value="FruBisAldo_II_B"/>
    <property type="match status" value="1"/>
</dbReference>
<dbReference type="PANTHER" id="PTHR30304">
    <property type="entry name" value="D-TAGATOSE-1,6-BISPHOSPHATE ALDOLASE"/>
    <property type="match status" value="1"/>
</dbReference>
<dbReference type="PANTHER" id="PTHR30304:SF0">
    <property type="entry name" value="D-TAGATOSE-1,6-BISPHOSPHATE ALDOLASE SUBUNIT GATY-RELATED"/>
    <property type="match status" value="1"/>
</dbReference>
<dbReference type="Pfam" id="PF01116">
    <property type="entry name" value="F_bP_aldolase"/>
    <property type="match status" value="1"/>
</dbReference>
<dbReference type="PIRSF" id="PIRSF001359">
    <property type="entry name" value="F_bP_aldolase_II"/>
    <property type="match status" value="1"/>
</dbReference>
<dbReference type="SUPFAM" id="SSF51569">
    <property type="entry name" value="Aldolase"/>
    <property type="match status" value="1"/>
</dbReference>
<dbReference type="PROSITE" id="PS00602">
    <property type="entry name" value="ALDOLASE_CLASS_II_1"/>
    <property type="match status" value="1"/>
</dbReference>
<dbReference type="PROSITE" id="PS00806">
    <property type="entry name" value="ALDOLASE_CLASS_II_2"/>
    <property type="match status" value="1"/>
</dbReference>
<proteinExistence type="inferred from homology"/>
<name>ALF_STUST</name>
<sequence>MALISMRQMLDHAAEFGYGVPAFNVNNLEQMRAIMEAADKTDSPVIVQASAGARKYAGAPFLRHLILAAIEEFPHIPVCMHQDHGTSPDVCQRSIQLGFSSVMMDGSLREDGKTPADYDYNVRVTQQTVAFAHACGVSVEGELGCLGSLETGMAGEEDGVGAEGVLDHSQLLTDPEEAADFVAKTKVDALAIAIGTSHGAYKFTNPPTGDTLSIQRIKEIHARIPDTHLVMHGSSSVPQEWLKIINEYGGEIGETYGVPVEEIVEGIKYGVRKVNIDTDLRLASTGAIREFLAKNPSEFDPRKYFAKTVAAMRDICIARYEAFGTAGNASKIKPISLEGMFQRYASGELDPKIN</sequence>
<keyword id="KW-0324">Glycolysis</keyword>
<keyword id="KW-0456">Lyase</keyword>
<keyword id="KW-0479">Metal-binding</keyword>
<keyword id="KW-0862">Zinc</keyword>
<comment type="function">
    <text evidence="1">Catalyzes the aldol condensation of dihydroxyacetone phosphate (DHAP or glycerone-phosphate) with glyceraldehyde 3-phosphate (G3P) to form fructose 1,6-bisphosphate (FBP) in gluconeogenesis and the reverse reaction in glycolysis.</text>
</comment>
<comment type="catalytic activity">
    <reaction>
        <text>beta-D-fructose 1,6-bisphosphate = D-glyceraldehyde 3-phosphate + dihydroxyacetone phosphate</text>
        <dbReference type="Rhea" id="RHEA:14729"/>
        <dbReference type="ChEBI" id="CHEBI:32966"/>
        <dbReference type="ChEBI" id="CHEBI:57642"/>
        <dbReference type="ChEBI" id="CHEBI:59776"/>
        <dbReference type="EC" id="4.1.2.13"/>
    </reaction>
</comment>
<comment type="cofactor">
    <cofactor evidence="1">
        <name>Zn(2+)</name>
        <dbReference type="ChEBI" id="CHEBI:29105"/>
    </cofactor>
    <text evidence="1">Binds 2 Zn(2+) ions per subunit. One is catalytic and the other provides a structural contribution.</text>
</comment>
<comment type="pathway">
    <text>Carbohydrate degradation; glycolysis; D-glyceraldehyde 3-phosphate and glycerone phosphate from D-glucose: step 4/4.</text>
</comment>
<comment type="similarity">
    <text evidence="2">Belongs to the class II fructose-bisphosphate aldolase family.</text>
</comment>